<reference key="1">
    <citation type="journal article" date="1999" name="Nature">
        <title>Sequence and analysis of chromosome 2 of the plant Arabidopsis thaliana.</title>
        <authorList>
            <person name="Lin X."/>
            <person name="Kaul S."/>
            <person name="Rounsley S.D."/>
            <person name="Shea T.P."/>
            <person name="Benito M.-I."/>
            <person name="Town C.D."/>
            <person name="Fujii C.Y."/>
            <person name="Mason T.M."/>
            <person name="Bowman C.L."/>
            <person name="Barnstead M.E."/>
            <person name="Feldblyum T.V."/>
            <person name="Buell C.R."/>
            <person name="Ketchum K.A."/>
            <person name="Lee J.J."/>
            <person name="Ronning C.M."/>
            <person name="Koo H.L."/>
            <person name="Moffat K.S."/>
            <person name="Cronin L.A."/>
            <person name="Shen M."/>
            <person name="Pai G."/>
            <person name="Van Aken S."/>
            <person name="Umayam L."/>
            <person name="Tallon L.J."/>
            <person name="Gill J.E."/>
            <person name="Adams M.D."/>
            <person name="Carrera A.J."/>
            <person name="Creasy T.H."/>
            <person name="Goodman H.M."/>
            <person name="Somerville C.R."/>
            <person name="Copenhaver G.P."/>
            <person name="Preuss D."/>
            <person name="Nierman W.C."/>
            <person name="White O."/>
            <person name="Eisen J.A."/>
            <person name="Salzberg S.L."/>
            <person name="Fraser C.M."/>
            <person name="Venter J.C."/>
        </authorList>
    </citation>
    <scope>NUCLEOTIDE SEQUENCE [LARGE SCALE GENOMIC DNA]</scope>
    <source>
        <strain>cv. Columbia</strain>
    </source>
</reference>
<reference key="2">
    <citation type="journal article" date="2017" name="Plant J.">
        <title>Araport11: a complete reannotation of the Arabidopsis thaliana reference genome.</title>
        <authorList>
            <person name="Cheng C.Y."/>
            <person name="Krishnakumar V."/>
            <person name="Chan A.P."/>
            <person name="Thibaud-Nissen F."/>
            <person name="Schobel S."/>
            <person name="Town C.D."/>
        </authorList>
    </citation>
    <scope>GENOME REANNOTATION</scope>
    <source>
        <strain>cv. Columbia</strain>
    </source>
</reference>
<reference key="3">
    <citation type="journal article" date="2003" name="Science">
        <title>Empirical analysis of transcriptional activity in the Arabidopsis genome.</title>
        <authorList>
            <person name="Yamada K."/>
            <person name="Lim J."/>
            <person name="Dale J.M."/>
            <person name="Chen H."/>
            <person name="Shinn P."/>
            <person name="Palm C.J."/>
            <person name="Southwick A.M."/>
            <person name="Wu H.C."/>
            <person name="Kim C.J."/>
            <person name="Nguyen M."/>
            <person name="Pham P.K."/>
            <person name="Cheuk R.F."/>
            <person name="Karlin-Newmann G."/>
            <person name="Liu S.X."/>
            <person name="Lam B."/>
            <person name="Sakano H."/>
            <person name="Wu T."/>
            <person name="Yu G."/>
            <person name="Miranda M."/>
            <person name="Quach H.L."/>
            <person name="Tripp M."/>
            <person name="Chang C.H."/>
            <person name="Lee J.M."/>
            <person name="Toriumi M.J."/>
            <person name="Chan M.M."/>
            <person name="Tang C.C."/>
            <person name="Onodera C.S."/>
            <person name="Deng J.M."/>
            <person name="Akiyama K."/>
            <person name="Ansari Y."/>
            <person name="Arakawa T."/>
            <person name="Banh J."/>
            <person name="Banno F."/>
            <person name="Bowser L."/>
            <person name="Brooks S.Y."/>
            <person name="Carninci P."/>
            <person name="Chao Q."/>
            <person name="Choy N."/>
            <person name="Enju A."/>
            <person name="Goldsmith A.D."/>
            <person name="Gurjal M."/>
            <person name="Hansen N.F."/>
            <person name="Hayashizaki Y."/>
            <person name="Johnson-Hopson C."/>
            <person name="Hsuan V.W."/>
            <person name="Iida K."/>
            <person name="Karnes M."/>
            <person name="Khan S."/>
            <person name="Koesema E."/>
            <person name="Ishida J."/>
            <person name="Jiang P.X."/>
            <person name="Jones T."/>
            <person name="Kawai J."/>
            <person name="Kamiya A."/>
            <person name="Meyers C."/>
            <person name="Nakajima M."/>
            <person name="Narusaka M."/>
            <person name="Seki M."/>
            <person name="Sakurai T."/>
            <person name="Satou M."/>
            <person name="Tamse R."/>
            <person name="Vaysberg M."/>
            <person name="Wallender E.K."/>
            <person name="Wong C."/>
            <person name="Yamamura Y."/>
            <person name="Yuan S."/>
            <person name="Shinozaki K."/>
            <person name="Davis R.W."/>
            <person name="Theologis A."/>
            <person name="Ecker J.R."/>
        </authorList>
    </citation>
    <scope>NUCLEOTIDE SEQUENCE [LARGE SCALE MRNA]</scope>
    <source>
        <strain>cv. Columbia</strain>
    </source>
</reference>
<reference key="4">
    <citation type="journal article" date="2006" name="Plant Physiol.">
        <title>Genome-wide analysis of the ERF gene family in Arabidopsis and rice.</title>
        <authorList>
            <person name="Nakano T."/>
            <person name="Suzuki K."/>
            <person name="Fujimura T."/>
            <person name="Shinshi H."/>
        </authorList>
    </citation>
    <scope>GENE FAMILY</scope>
    <scope>NOMENCLATURE</scope>
</reference>
<gene>
    <name type="primary">ERF056</name>
    <name type="ordered locus">At2g22200</name>
    <name type="ORF">T26C19.14</name>
</gene>
<comment type="function">
    <text evidence="1">Probably acts as a transcriptional activator. Binds to the GCC-box pathogenesis-related promoter element. May be involved in the regulation of gene expression by stress factors and by components of stress signal transduction pathways (By similarity).</text>
</comment>
<comment type="subcellular location">
    <subcellularLocation>
        <location evidence="4">Nucleus</location>
    </subcellularLocation>
</comment>
<comment type="similarity">
    <text evidence="4">Belongs to the AP2/ERF transcription factor family. ERF subfamily.</text>
</comment>
<evidence type="ECO:0000250" key="1"/>
<evidence type="ECO:0000255" key="2">
    <source>
        <dbReference type="PROSITE-ProRule" id="PRU00366"/>
    </source>
</evidence>
<evidence type="ECO:0000256" key="3">
    <source>
        <dbReference type="SAM" id="MobiDB-lite"/>
    </source>
</evidence>
<evidence type="ECO:0000305" key="4"/>
<name>ERF56_ARATH</name>
<accession>Q9SIE4</accession>
<accession>Q8RX62</accession>
<dbReference type="EMBL" id="AC007168">
    <property type="protein sequence ID" value="AAD23620.1"/>
    <property type="molecule type" value="Genomic_DNA"/>
</dbReference>
<dbReference type="EMBL" id="CP002685">
    <property type="protein sequence ID" value="AEC07277.1"/>
    <property type="molecule type" value="Genomic_DNA"/>
</dbReference>
<dbReference type="EMBL" id="AY090378">
    <property type="protein sequence ID" value="AAL91280.1"/>
    <property type="molecule type" value="mRNA"/>
</dbReference>
<dbReference type="EMBL" id="AY143836">
    <property type="protein sequence ID" value="AAN28775.1"/>
    <property type="molecule type" value="mRNA"/>
</dbReference>
<dbReference type="PIR" id="B84610">
    <property type="entry name" value="B84610"/>
</dbReference>
<dbReference type="RefSeq" id="NP_179810.1">
    <property type="nucleotide sequence ID" value="NM_127788.4"/>
</dbReference>
<dbReference type="SMR" id="Q9SIE4"/>
<dbReference type="BioGRID" id="2107">
    <property type="interactions" value="7"/>
</dbReference>
<dbReference type="FunCoup" id="Q9SIE4">
    <property type="interactions" value="1"/>
</dbReference>
<dbReference type="IntAct" id="Q9SIE4">
    <property type="interactions" value="4"/>
</dbReference>
<dbReference type="STRING" id="3702.Q9SIE4"/>
<dbReference type="PaxDb" id="3702-AT2G22200.1"/>
<dbReference type="EnsemblPlants" id="AT2G22200.1">
    <property type="protein sequence ID" value="AT2G22200.1"/>
    <property type="gene ID" value="AT2G22200"/>
</dbReference>
<dbReference type="GeneID" id="816754"/>
<dbReference type="Gramene" id="AT2G22200.1">
    <property type="protein sequence ID" value="AT2G22200.1"/>
    <property type="gene ID" value="AT2G22200"/>
</dbReference>
<dbReference type="KEGG" id="ath:AT2G22200"/>
<dbReference type="Araport" id="AT2G22200"/>
<dbReference type="TAIR" id="AT2G22200"/>
<dbReference type="eggNOG" id="ENOG502QQEY">
    <property type="taxonomic scope" value="Eukaryota"/>
</dbReference>
<dbReference type="HOGENOM" id="CLU_057028_1_0_1"/>
<dbReference type="InParanoid" id="Q9SIE4"/>
<dbReference type="OMA" id="PNIRHED"/>
<dbReference type="PhylomeDB" id="Q9SIE4"/>
<dbReference type="PRO" id="PR:Q9SIE4"/>
<dbReference type="Proteomes" id="UP000006548">
    <property type="component" value="Chromosome 2"/>
</dbReference>
<dbReference type="ExpressionAtlas" id="Q9SIE4">
    <property type="expression patterns" value="baseline and differential"/>
</dbReference>
<dbReference type="GO" id="GO:0005634">
    <property type="term" value="C:nucleus"/>
    <property type="evidence" value="ECO:0007669"/>
    <property type="project" value="UniProtKB-SubCell"/>
</dbReference>
<dbReference type="GO" id="GO:0003700">
    <property type="term" value="F:DNA-binding transcription factor activity"/>
    <property type="evidence" value="ECO:0000250"/>
    <property type="project" value="TAIR"/>
</dbReference>
<dbReference type="GO" id="GO:0000976">
    <property type="term" value="F:transcription cis-regulatory region binding"/>
    <property type="evidence" value="ECO:0007669"/>
    <property type="project" value="UniProtKB-ARBA"/>
</dbReference>
<dbReference type="GO" id="GO:0009873">
    <property type="term" value="P:ethylene-activated signaling pathway"/>
    <property type="evidence" value="ECO:0007669"/>
    <property type="project" value="UniProtKB-KW"/>
</dbReference>
<dbReference type="CDD" id="cd00018">
    <property type="entry name" value="AP2"/>
    <property type="match status" value="1"/>
</dbReference>
<dbReference type="FunFam" id="3.30.730.10:FF:000001">
    <property type="entry name" value="Ethylene-responsive transcription factor 2"/>
    <property type="match status" value="1"/>
</dbReference>
<dbReference type="Gene3D" id="3.30.730.10">
    <property type="entry name" value="AP2/ERF domain"/>
    <property type="match status" value="1"/>
</dbReference>
<dbReference type="InterPro" id="IPR001471">
    <property type="entry name" value="AP2/ERF_dom"/>
</dbReference>
<dbReference type="InterPro" id="IPR036955">
    <property type="entry name" value="AP2/ERF_dom_sf"/>
</dbReference>
<dbReference type="InterPro" id="IPR016177">
    <property type="entry name" value="DNA-bd_dom_sf"/>
</dbReference>
<dbReference type="InterPro" id="IPR051758">
    <property type="entry name" value="ERF/AP2-like"/>
</dbReference>
<dbReference type="PANTHER" id="PTHR31657:SF29">
    <property type="entry name" value="ETHYLENE-RESPONSIVE TRANSCRIPTION FACTOR ERF056"/>
    <property type="match status" value="1"/>
</dbReference>
<dbReference type="PANTHER" id="PTHR31657">
    <property type="entry name" value="ETHYLENE-RESPONSIVE TRANSCRIPTION FACTOR ERF061"/>
    <property type="match status" value="1"/>
</dbReference>
<dbReference type="Pfam" id="PF00847">
    <property type="entry name" value="AP2"/>
    <property type="match status" value="1"/>
</dbReference>
<dbReference type="PRINTS" id="PR00367">
    <property type="entry name" value="ETHRSPELEMNT"/>
</dbReference>
<dbReference type="SMART" id="SM00380">
    <property type="entry name" value="AP2"/>
    <property type="match status" value="1"/>
</dbReference>
<dbReference type="SUPFAM" id="SSF54171">
    <property type="entry name" value="DNA-binding domain"/>
    <property type="match status" value="1"/>
</dbReference>
<dbReference type="PROSITE" id="PS51032">
    <property type="entry name" value="AP2_ERF"/>
    <property type="match status" value="1"/>
</dbReference>
<feature type="chain" id="PRO_0000290395" description="Ethylene-responsive transcription factor ERF056">
    <location>
        <begin position="1"/>
        <end position="261"/>
    </location>
</feature>
<feature type="DNA-binding region" description="AP2/ERF" evidence="2">
    <location>
        <begin position="70"/>
        <end position="127"/>
    </location>
</feature>
<feature type="region of interest" description="Disordered" evidence="3">
    <location>
        <begin position="195"/>
        <end position="224"/>
    </location>
</feature>
<feature type="sequence conflict" description="In Ref. 3; AAL91280/AAN28775." evidence="4" ref="3">
    <original>F</original>
    <variation>L</variation>
    <location>
        <position position="126"/>
    </location>
</feature>
<protein>
    <recommendedName>
        <fullName>Ethylene-responsive transcription factor ERF056</fullName>
    </recommendedName>
</protein>
<organism>
    <name type="scientific">Arabidopsis thaliana</name>
    <name type="common">Mouse-ear cress</name>
    <dbReference type="NCBI Taxonomy" id="3702"/>
    <lineage>
        <taxon>Eukaryota</taxon>
        <taxon>Viridiplantae</taxon>
        <taxon>Streptophyta</taxon>
        <taxon>Embryophyta</taxon>
        <taxon>Tracheophyta</taxon>
        <taxon>Spermatophyta</taxon>
        <taxon>Magnoliopsida</taxon>
        <taxon>eudicotyledons</taxon>
        <taxon>Gunneridae</taxon>
        <taxon>Pentapetalae</taxon>
        <taxon>rosids</taxon>
        <taxon>malvids</taxon>
        <taxon>Brassicales</taxon>
        <taxon>Brassicaceae</taxon>
        <taxon>Camelineae</taxon>
        <taxon>Arabidopsis</taxon>
    </lineage>
</organism>
<proteinExistence type="evidence at transcript level"/>
<sequence>METASLSFPVPNTSFGVNKSMPLGLNQLTPYQIHQIQNQLNHRRSTISNLSPNRIRMKNLTPSTSKTKNLYRGVRQRHWGKWVAEIRLPKNRTRLWLGTFETAEKAALAYDQAAFQLRGDIAKLNFPNLIHEDMNPLPSSVDTKLQAICKSLRKTEEICSVSDQTKEYSVYSVSDKTELFLPKAELFLPKREHLETNELSNESPRSDETSLLDESQAEYSSSDKTFLDFSDTEFEEIGSFGLRKFPSVEIDWDAISKLANS</sequence>
<keyword id="KW-0010">Activator</keyword>
<keyword id="KW-0238">DNA-binding</keyword>
<keyword id="KW-0936">Ethylene signaling pathway</keyword>
<keyword id="KW-0539">Nucleus</keyword>
<keyword id="KW-1185">Reference proteome</keyword>
<keyword id="KW-0804">Transcription</keyword>
<keyword id="KW-0805">Transcription regulation</keyword>